<name>CYSD_MYCTA</name>
<accession>A5U1Y3</accession>
<sequence>MTSDVTVGPAPGQYQLSHLRLLEAEAIHVIREVAAEFERPVLLFSGGKDSIVMLHLALKAFRPGRLPFPVMHVDTGHNFDEVIATRDELVAAAGVRLVVASVQDDIDAGRVVETIPSRNPIQTVTLLRAIRENQFDAAFGGARRDEEKARAKERVFSFRDEFGQWDPKAQRPELWNLYNGRHHKGEHIRVFPLSNWTEFDIWSYIGAEQVRLPSIYFAHRRKVFQRDGMLLAVHRHMQPRADEPVFEATVRFRTVGDVTCTGCVESSASTVAEVIAETAVARLTERGATRADDRISEAGMEDRKRQGYF</sequence>
<comment type="function">
    <text evidence="1">With CysN forms the ATP sulfurylase (ATPS) that catalyzes the adenylation of sulfate producing adenosine 5'-phosphosulfate (APS) and diphosphate, the first enzymatic step in sulfur assimilation pathway. APS synthesis involves the formation of a high-energy phosphoric-sulfuric acid anhydride bond driven by GTP hydrolysis by CysN coupled to ATP hydrolysis by CysD.</text>
</comment>
<comment type="catalytic activity">
    <reaction evidence="1">
        <text>sulfate + ATP + H(+) = adenosine 5'-phosphosulfate + diphosphate</text>
        <dbReference type="Rhea" id="RHEA:18133"/>
        <dbReference type="ChEBI" id="CHEBI:15378"/>
        <dbReference type="ChEBI" id="CHEBI:16189"/>
        <dbReference type="ChEBI" id="CHEBI:30616"/>
        <dbReference type="ChEBI" id="CHEBI:33019"/>
        <dbReference type="ChEBI" id="CHEBI:58243"/>
        <dbReference type="EC" id="2.7.7.4"/>
    </reaction>
</comment>
<comment type="pathway">
    <text evidence="1">Sulfur metabolism; hydrogen sulfide biosynthesis; sulfite from sulfate: step 1/3.</text>
</comment>
<comment type="subunit">
    <text evidence="1">Heterodimer composed of CysD, the smaller subunit, and CysN.</text>
</comment>
<comment type="similarity">
    <text evidence="1">Belongs to the PAPS reductase family. CysD subfamily.</text>
</comment>
<comment type="sequence caution" evidence="2">
    <conflict type="erroneous initiation">
        <sequence resource="EMBL-CDS" id="ABQ73033"/>
    </conflict>
</comment>
<organism>
    <name type="scientific">Mycobacterium tuberculosis (strain ATCC 25177 / H37Ra)</name>
    <dbReference type="NCBI Taxonomy" id="419947"/>
    <lineage>
        <taxon>Bacteria</taxon>
        <taxon>Bacillati</taxon>
        <taxon>Actinomycetota</taxon>
        <taxon>Actinomycetes</taxon>
        <taxon>Mycobacteriales</taxon>
        <taxon>Mycobacteriaceae</taxon>
        <taxon>Mycobacterium</taxon>
        <taxon>Mycobacterium tuberculosis complex</taxon>
    </lineage>
</organism>
<evidence type="ECO:0000255" key="1">
    <source>
        <dbReference type="HAMAP-Rule" id="MF_00064"/>
    </source>
</evidence>
<evidence type="ECO:0000305" key="2"/>
<dbReference type="EC" id="2.7.7.4" evidence="1"/>
<dbReference type="EMBL" id="CP000611">
    <property type="protein sequence ID" value="ABQ73033.1"/>
    <property type="status" value="ALT_INIT"/>
    <property type="molecule type" value="Genomic_DNA"/>
</dbReference>
<dbReference type="SMR" id="A5U1Y3"/>
<dbReference type="KEGG" id="mra:MRA_1293"/>
<dbReference type="eggNOG" id="COG0175">
    <property type="taxonomic scope" value="Bacteria"/>
</dbReference>
<dbReference type="HOGENOM" id="CLU_043026_0_0_11"/>
<dbReference type="UniPathway" id="UPA00140">
    <property type="reaction ID" value="UER00204"/>
</dbReference>
<dbReference type="Proteomes" id="UP000001988">
    <property type="component" value="Chromosome"/>
</dbReference>
<dbReference type="GO" id="GO:0005524">
    <property type="term" value="F:ATP binding"/>
    <property type="evidence" value="ECO:0007669"/>
    <property type="project" value="UniProtKB-KW"/>
</dbReference>
<dbReference type="GO" id="GO:0004781">
    <property type="term" value="F:sulfate adenylyltransferase (ATP) activity"/>
    <property type="evidence" value="ECO:0007669"/>
    <property type="project" value="UniProtKB-UniRule"/>
</dbReference>
<dbReference type="GO" id="GO:0070814">
    <property type="term" value="P:hydrogen sulfide biosynthetic process"/>
    <property type="evidence" value="ECO:0007669"/>
    <property type="project" value="UniProtKB-UniRule"/>
</dbReference>
<dbReference type="GO" id="GO:0000103">
    <property type="term" value="P:sulfate assimilation"/>
    <property type="evidence" value="ECO:0007669"/>
    <property type="project" value="UniProtKB-UniRule"/>
</dbReference>
<dbReference type="FunFam" id="3.40.50.620:FF:000002">
    <property type="entry name" value="Sulfate adenylyltransferase subunit 2"/>
    <property type="match status" value="1"/>
</dbReference>
<dbReference type="Gene3D" id="3.40.50.620">
    <property type="entry name" value="HUPs"/>
    <property type="match status" value="1"/>
</dbReference>
<dbReference type="HAMAP" id="MF_00064">
    <property type="entry name" value="Sulf_adenylyltr_sub2"/>
    <property type="match status" value="1"/>
</dbReference>
<dbReference type="InterPro" id="IPR002500">
    <property type="entry name" value="PAPS_reduct_dom"/>
</dbReference>
<dbReference type="InterPro" id="IPR014729">
    <property type="entry name" value="Rossmann-like_a/b/a_fold"/>
</dbReference>
<dbReference type="InterPro" id="IPR011784">
    <property type="entry name" value="SO4_adenylTrfase_ssu"/>
</dbReference>
<dbReference type="InterPro" id="IPR050128">
    <property type="entry name" value="Sulfate_adenylyltrnsfr_sub2"/>
</dbReference>
<dbReference type="NCBIfam" id="TIGR02039">
    <property type="entry name" value="CysD"/>
    <property type="match status" value="1"/>
</dbReference>
<dbReference type="NCBIfam" id="NF003587">
    <property type="entry name" value="PRK05253.1"/>
    <property type="match status" value="1"/>
</dbReference>
<dbReference type="NCBIfam" id="NF009214">
    <property type="entry name" value="PRK12563.1"/>
    <property type="match status" value="1"/>
</dbReference>
<dbReference type="PANTHER" id="PTHR43196">
    <property type="entry name" value="SULFATE ADENYLYLTRANSFERASE SUBUNIT 2"/>
    <property type="match status" value="1"/>
</dbReference>
<dbReference type="PANTHER" id="PTHR43196:SF1">
    <property type="entry name" value="SULFATE ADENYLYLTRANSFERASE SUBUNIT 2"/>
    <property type="match status" value="1"/>
</dbReference>
<dbReference type="Pfam" id="PF01507">
    <property type="entry name" value="PAPS_reduct"/>
    <property type="match status" value="1"/>
</dbReference>
<dbReference type="PIRSF" id="PIRSF002936">
    <property type="entry name" value="CysDAde_trans"/>
    <property type="match status" value="1"/>
</dbReference>
<dbReference type="SUPFAM" id="SSF52402">
    <property type="entry name" value="Adenine nucleotide alpha hydrolases-like"/>
    <property type="match status" value="1"/>
</dbReference>
<feature type="chain" id="PRO_0000340207" description="Sulfate adenylyltransferase subunit 2">
    <location>
        <begin position="1"/>
        <end position="309"/>
    </location>
</feature>
<proteinExistence type="inferred from homology"/>
<keyword id="KW-0067">ATP-binding</keyword>
<keyword id="KW-0547">Nucleotide-binding</keyword>
<keyword id="KW-0548">Nucleotidyltransferase</keyword>
<keyword id="KW-1185">Reference proteome</keyword>
<keyword id="KW-0808">Transferase</keyword>
<protein>
    <recommendedName>
        <fullName evidence="1">Sulfate adenylyltransferase subunit 2</fullName>
        <ecNumber evidence="1">2.7.7.4</ecNumber>
    </recommendedName>
    <alternativeName>
        <fullName evidence="1">ATP-sulfurylase small subunit</fullName>
    </alternativeName>
    <alternativeName>
        <fullName evidence="1">Sulfate adenylate transferase</fullName>
        <shortName evidence="1">SAT</shortName>
    </alternativeName>
</protein>
<reference key="1">
    <citation type="journal article" date="2008" name="PLoS ONE">
        <title>Genetic basis of virulence attenuation revealed by comparative genomic analysis of Mycobacterium tuberculosis strain H37Ra versus H37Rv.</title>
        <authorList>
            <person name="Zheng H."/>
            <person name="Lu L."/>
            <person name="Wang B."/>
            <person name="Pu S."/>
            <person name="Zhang X."/>
            <person name="Zhu G."/>
            <person name="Shi W."/>
            <person name="Zhang L."/>
            <person name="Wang H."/>
            <person name="Wang S."/>
            <person name="Zhao G."/>
            <person name="Zhang Y."/>
        </authorList>
    </citation>
    <scope>NUCLEOTIDE SEQUENCE [LARGE SCALE GENOMIC DNA]</scope>
    <source>
        <strain>ATCC 25177 / H37Ra</strain>
    </source>
</reference>
<gene>
    <name evidence="1" type="primary">cysD</name>
    <name type="ordered locus">MRA_1293</name>
</gene>